<proteinExistence type="inferred from homology"/>
<reference key="1">
    <citation type="journal article" date="2003" name="Proc. Natl. Acad. Sci. U.S.A.">
        <title>The complete genome sequence of Mycobacterium bovis.</title>
        <authorList>
            <person name="Garnier T."/>
            <person name="Eiglmeier K."/>
            <person name="Camus J.-C."/>
            <person name="Medina N."/>
            <person name="Mansoor H."/>
            <person name="Pryor M."/>
            <person name="Duthoy S."/>
            <person name="Grondin S."/>
            <person name="Lacroix C."/>
            <person name="Monsempe C."/>
            <person name="Simon S."/>
            <person name="Harris B."/>
            <person name="Atkin R."/>
            <person name="Doggett J."/>
            <person name="Mayes R."/>
            <person name="Keating L."/>
            <person name="Wheeler P.R."/>
            <person name="Parkhill J."/>
            <person name="Barrell B.G."/>
            <person name="Cole S.T."/>
            <person name="Gordon S.V."/>
            <person name="Hewinson R.G."/>
        </authorList>
    </citation>
    <scope>NUCLEOTIDE SEQUENCE [LARGE SCALE GENOMIC DNA]</scope>
    <source>
        <strain>ATCC BAA-935 / AF2122/97</strain>
    </source>
</reference>
<reference key="2">
    <citation type="journal article" date="2017" name="Genome Announc.">
        <title>Updated reference genome sequence and annotation of Mycobacterium bovis AF2122/97.</title>
        <authorList>
            <person name="Malone K.M."/>
            <person name="Farrell D."/>
            <person name="Stuber T.P."/>
            <person name="Schubert O.T."/>
            <person name="Aebersold R."/>
            <person name="Robbe-Austerman S."/>
            <person name="Gordon S.V."/>
        </authorList>
    </citation>
    <scope>NUCLEOTIDE SEQUENCE [LARGE SCALE GENOMIC DNA]</scope>
    <scope>GENOME REANNOTATION</scope>
    <source>
        <strain>ATCC BAA-935 / AF2122/97</strain>
    </source>
</reference>
<accession>P67457</accession>
<accession>A0A1R3XXD2</accession>
<accession>O53455</accession>
<accession>X2BGY7</accession>
<keyword id="KW-0963">Cytoplasm</keyword>
<keyword id="KW-0269">Exonuclease</keyword>
<keyword id="KW-0378">Hydrolase</keyword>
<keyword id="KW-0540">Nuclease</keyword>
<keyword id="KW-1185">Reference proteome</keyword>
<dbReference type="EC" id="3.1.11.6" evidence="1"/>
<dbReference type="EMBL" id="LT708304">
    <property type="protein sequence ID" value="SIT99737.1"/>
    <property type="molecule type" value="Genomic_DNA"/>
</dbReference>
<dbReference type="RefSeq" id="NP_854793.1">
    <property type="nucleotide sequence ID" value="NC_002945.3"/>
</dbReference>
<dbReference type="RefSeq" id="WP_003405844.1">
    <property type="nucleotide sequence ID" value="NC_002945.4"/>
</dbReference>
<dbReference type="SMR" id="P67457"/>
<dbReference type="KEGG" id="mbo:BQ2027_MB1137C"/>
<dbReference type="PATRIC" id="fig|233413.5.peg.1244"/>
<dbReference type="Proteomes" id="UP000001419">
    <property type="component" value="Chromosome"/>
</dbReference>
<dbReference type="GO" id="GO:0005829">
    <property type="term" value="C:cytosol"/>
    <property type="evidence" value="ECO:0007669"/>
    <property type="project" value="TreeGrafter"/>
</dbReference>
<dbReference type="GO" id="GO:0009318">
    <property type="term" value="C:exodeoxyribonuclease VII complex"/>
    <property type="evidence" value="ECO:0007669"/>
    <property type="project" value="InterPro"/>
</dbReference>
<dbReference type="GO" id="GO:0008855">
    <property type="term" value="F:exodeoxyribonuclease VII activity"/>
    <property type="evidence" value="ECO:0007669"/>
    <property type="project" value="UniProtKB-UniRule"/>
</dbReference>
<dbReference type="GO" id="GO:0006308">
    <property type="term" value="P:DNA catabolic process"/>
    <property type="evidence" value="ECO:0007669"/>
    <property type="project" value="UniProtKB-UniRule"/>
</dbReference>
<dbReference type="FunFam" id="1.10.287.1040:FF:000004">
    <property type="entry name" value="Exodeoxyribonuclease 7 small subunit"/>
    <property type="match status" value="1"/>
</dbReference>
<dbReference type="Gene3D" id="1.10.287.1040">
    <property type="entry name" value="Exonuclease VII, small subunit"/>
    <property type="match status" value="1"/>
</dbReference>
<dbReference type="HAMAP" id="MF_00337">
    <property type="entry name" value="Exonuc_7_S"/>
    <property type="match status" value="1"/>
</dbReference>
<dbReference type="InterPro" id="IPR003761">
    <property type="entry name" value="Exonuc_VII_S"/>
</dbReference>
<dbReference type="InterPro" id="IPR037004">
    <property type="entry name" value="Exonuc_VII_ssu_sf"/>
</dbReference>
<dbReference type="NCBIfam" id="NF002139">
    <property type="entry name" value="PRK00977.1-3"/>
    <property type="match status" value="1"/>
</dbReference>
<dbReference type="NCBIfam" id="TIGR01280">
    <property type="entry name" value="xseB"/>
    <property type="match status" value="1"/>
</dbReference>
<dbReference type="PANTHER" id="PTHR34137">
    <property type="entry name" value="EXODEOXYRIBONUCLEASE 7 SMALL SUBUNIT"/>
    <property type="match status" value="1"/>
</dbReference>
<dbReference type="PANTHER" id="PTHR34137:SF1">
    <property type="entry name" value="EXODEOXYRIBONUCLEASE 7 SMALL SUBUNIT"/>
    <property type="match status" value="1"/>
</dbReference>
<dbReference type="Pfam" id="PF02609">
    <property type="entry name" value="Exonuc_VII_S"/>
    <property type="match status" value="1"/>
</dbReference>
<dbReference type="PIRSF" id="PIRSF006488">
    <property type="entry name" value="Exonuc_VII_S"/>
    <property type="match status" value="1"/>
</dbReference>
<dbReference type="SUPFAM" id="SSF116842">
    <property type="entry name" value="XseB-like"/>
    <property type="match status" value="1"/>
</dbReference>
<organism>
    <name type="scientific">Mycobacterium bovis (strain ATCC BAA-935 / AF2122/97)</name>
    <dbReference type="NCBI Taxonomy" id="233413"/>
    <lineage>
        <taxon>Bacteria</taxon>
        <taxon>Bacillati</taxon>
        <taxon>Actinomycetota</taxon>
        <taxon>Actinomycetes</taxon>
        <taxon>Mycobacteriales</taxon>
        <taxon>Mycobacteriaceae</taxon>
        <taxon>Mycobacterium</taxon>
        <taxon>Mycobacterium tuberculosis complex</taxon>
    </lineage>
</organism>
<gene>
    <name evidence="1" type="primary">xseB</name>
    <name type="ordered locus">BQ2027_MB1137C</name>
</gene>
<name>EX7S_MYCBO</name>
<comment type="function">
    <text evidence="1">Bidirectionally degrades single-stranded DNA into large acid-insoluble oligonucleotides, which are then degraded further into small acid-soluble oligonucleotides.</text>
</comment>
<comment type="catalytic activity">
    <reaction evidence="1">
        <text>Exonucleolytic cleavage in either 5'- to 3'- or 3'- to 5'-direction to yield nucleoside 5'-phosphates.</text>
        <dbReference type="EC" id="3.1.11.6"/>
    </reaction>
</comment>
<comment type="subunit">
    <text evidence="1">Heterooligomer composed of large and small subunits.</text>
</comment>
<comment type="subcellular location">
    <subcellularLocation>
        <location evidence="1">Cytoplasm</location>
    </subcellularLocation>
</comment>
<comment type="similarity">
    <text evidence="1 2">Belongs to the XseB family.</text>
</comment>
<protein>
    <recommendedName>
        <fullName evidence="1">Exodeoxyribonuclease 7 small subunit</fullName>
        <ecNumber evidence="1">3.1.11.6</ecNumber>
    </recommendedName>
    <alternativeName>
        <fullName evidence="1">Exodeoxyribonuclease VII small subunit</fullName>
        <shortName evidence="1">Exonuclease VII small subunit</shortName>
    </alternativeName>
</protein>
<sequence>MVCDPNGDDTGRTHATVPVSQLGYEACRDELMEVVRLLEQGGLDLDASLRLWERGEQLAKRCEEHLAGARQRVSDVLAGDEAQNG</sequence>
<evidence type="ECO:0000255" key="1">
    <source>
        <dbReference type="HAMAP-Rule" id="MF_00337"/>
    </source>
</evidence>
<evidence type="ECO:0000305" key="2"/>
<feature type="chain" id="PRO_0000206972" description="Exodeoxyribonuclease 7 small subunit">
    <location>
        <begin position="1"/>
        <end position="85"/>
    </location>
</feature>